<accession>B7J156</accession>
<comment type="similarity">
    <text evidence="1">Belongs to the universal ribosomal protein uS2 family.</text>
</comment>
<evidence type="ECO:0000255" key="1">
    <source>
        <dbReference type="HAMAP-Rule" id="MF_00291"/>
    </source>
</evidence>
<evidence type="ECO:0000305" key="2"/>
<name>RS2_BORBZ</name>
<sequence>MAIITMKSLLEAGVHFGHQVKRLDPRMKRFIFSERNEIHILDLQKTLQGIKDSYELVQRVIKDGKKVLFVGTKKQASEIIEQEARRSDMPYVNNRWLGGMLSNFNTIRKSVQKLKKLEKMEVDGTFDMISKKEISQLNREKSKLAKNLTGIKDMETLPGAIFIIDPKREQIAINEARKLKIPIISVVDTNCNPDVIDCPIPGNDDAIRSVALFTKIISDAILESDKEVGIQIIENLNEEDLMKEIEIKNDKSDSIEEGGNNL</sequence>
<gene>
    <name evidence="1" type="primary">rpsB</name>
    <name type="ordered locus">BbuZS7_0123</name>
</gene>
<feature type="chain" id="PRO_1000119419" description="Small ribosomal subunit protein uS2">
    <location>
        <begin position="1"/>
        <end position="262"/>
    </location>
</feature>
<organism>
    <name type="scientific">Borreliella burgdorferi (strain ZS7)</name>
    <name type="common">Borrelia burgdorferi</name>
    <dbReference type="NCBI Taxonomy" id="445985"/>
    <lineage>
        <taxon>Bacteria</taxon>
        <taxon>Pseudomonadati</taxon>
        <taxon>Spirochaetota</taxon>
        <taxon>Spirochaetia</taxon>
        <taxon>Spirochaetales</taxon>
        <taxon>Borreliaceae</taxon>
        <taxon>Borreliella</taxon>
    </lineage>
</organism>
<protein>
    <recommendedName>
        <fullName evidence="1">Small ribosomal subunit protein uS2</fullName>
    </recommendedName>
    <alternativeName>
        <fullName evidence="2">30S ribosomal protein S2</fullName>
    </alternativeName>
</protein>
<proteinExistence type="inferred from homology"/>
<dbReference type="EMBL" id="CP001205">
    <property type="protein sequence ID" value="ACK74648.1"/>
    <property type="molecule type" value="Genomic_DNA"/>
</dbReference>
<dbReference type="RefSeq" id="WP_012597338.1">
    <property type="nucleotide sequence ID" value="NC_011728.1"/>
</dbReference>
<dbReference type="SMR" id="B7J156"/>
<dbReference type="KEGG" id="bbz:BbuZS7_0123"/>
<dbReference type="HOGENOM" id="CLU_040318_1_3_12"/>
<dbReference type="Proteomes" id="UP000006901">
    <property type="component" value="Chromosome"/>
</dbReference>
<dbReference type="GO" id="GO:0022627">
    <property type="term" value="C:cytosolic small ribosomal subunit"/>
    <property type="evidence" value="ECO:0007669"/>
    <property type="project" value="TreeGrafter"/>
</dbReference>
<dbReference type="GO" id="GO:0003735">
    <property type="term" value="F:structural constituent of ribosome"/>
    <property type="evidence" value="ECO:0007669"/>
    <property type="project" value="InterPro"/>
</dbReference>
<dbReference type="GO" id="GO:0006412">
    <property type="term" value="P:translation"/>
    <property type="evidence" value="ECO:0007669"/>
    <property type="project" value="UniProtKB-UniRule"/>
</dbReference>
<dbReference type="CDD" id="cd01425">
    <property type="entry name" value="RPS2"/>
    <property type="match status" value="1"/>
</dbReference>
<dbReference type="FunFam" id="1.10.287.610:FF:000001">
    <property type="entry name" value="30S ribosomal protein S2"/>
    <property type="match status" value="1"/>
</dbReference>
<dbReference type="Gene3D" id="3.40.50.10490">
    <property type="entry name" value="Glucose-6-phosphate isomerase like protein, domain 1"/>
    <property type="match status" value="1"/>
</dbReference>
<dbReference type="Gene3D" id="1.10.287.610">
    <property type="entry name" value="Helix hairpin bin"/>
    <property type="match status" value="1"/>
</dbReference>
<dbReference type="HAMAP" id="MF_00291_B">
    <property type="entry name" value="Ribosomal_uS2_B"/>
    <property type="match status" value="1"/>
</dbReference>
<dbReference type="InterPro" id="IPR001865">
    <property type="entry name" value="Ribosomal_uS2"/>
</dbReference>
<dbReference type="InterPro" id="IPR005706">
    <property type="entry name" value="Ribosomal_uS2_bac/mit/plastid"/>
</dbReference>
<dbReference type="InterPro" id="IPR018130">
    <property type="entry name" value="Ribosomal_uS2_CS"/>
</dbReference>
<dbReference type="InterPro" id="IPR023591">
    <property type="entry name" value="Ribosomal_uS2_flav_dom_sf"/>
</dbReference>
<dbReference type="NCBIfam" id="TIGR01011">
    <property type="entry name" value="rpsB_bact"/>
    <property type="match status" value="1"/>
</dbReference>
<dbReference type="PANTHER" id="PTHR12534">
    <property type="entry name" value="30S RIBOSOMAL PROTEIN S2 PROKARYOTIC AND ORGANELLAR"/>
    <property type="match status" value="1"/>
</dbReference>
<dbReference type="PANTHER" id="PTHR12534:SF0">
    <property type="entry name" value="SMALL RIBOSOMAL SUBUNIT PROTEIN US2M"/>
    <property type="match status" value="1"/>
</dbReference>
<dbReference type="Pfam" id="PF00318">
    <property type="entry name" value="Ribosomal_S2"/>
    <property type="match status" value="1"/>
</dbReference>
<dbReference type="PRINTS" id="PR00395">
    <property type="entry name" value="RIBOSOMALS2"/>
</dbReference>
<dbReference type="SUPFAM" id="SSF52313">
    <property type="entry name" value="Ribosomal protein S2"/>
    <property type="match status" value="1"/>
</dbReference>
<dbReference type="PROSITE" id="PS00962">
    <property type="entry name" value="RIBOSOMAL_S2_1"/>
    <property type="match status" value="1"/>
</dbReference>
<dbReference type="PROSITE" id="PS00963">
    <property type="entry name" value="RIBOSOMAL_S2_2"/>
    <property type="match status" value="1"/>
</dbReference>
<reference key="1">
    <citation type="journal article" date="2011" name="J. Bacteriol.">
        <title>Whole-genome sequences of thirteen isolates of Borrelia burgdorferi.</title>
        <authorList>
            <person name="Schutzer S.E."/>
            <person name="Fraser-Liggett C.M."/>
            <person name="Casjens S.R."/>
            <person name="Qiu W.G."/>
            <person name="Dunn J.J."/>
            <person name="Mongodin E.F."/>
            <person name="Luft B.J."/>
        </authorList>
    </citation>
    <scope>NUCLEOTIDE SEQUENCE [LARGE SCALE GENOMIC DNA]</scope>
    <source>
        <strain>ZS7</strain>
    </source>
</reference>
<keyword id="KW-0687">Ribonucleoprotein</keyword>
<keyword id="KW-0689">Ribosomal protein</keyword>